<reference key="1">
    <citation type="journal article" date="2005" name="BMC Genomics">
        <title>Characterization of 954 bovine full-CDS cDNA sequences.</title>
        <authorList>
            <person name="Harhay G.P."/>
            <person name="Sonstegard T.S."/>
            <person name="Keele J.W."/>
            <person name="Heaton M.P."/>
            <person name="Clawson M.L."/>
            <person name="Snelling W.M."/>
            <person name="Wiedmann R.T."/>
            <person name="Van Tassell C.P."/>
            <person name="Smith T.P.L."/>
        </authorList>
    </citation>
    <scope>NUCLEOTIDE SEQUENCE [LARGE SCALE MRNA]</scope>
</reference>
<reference key="2">
    <citation type="submission" date="2006-09" db="EMBL/GenBank/DDBJ databases">
        <authorList>
            <consortium name="NIH - Mammalian Gene Collection (MGC) project"/>
        </authorList>
    </citation>
    <scope>NUCLEOTIDE SEQUENCE [LARGE SCALE MRNA]</scope>
    <source>
        <strain>Hereford</strain>
        <tissue>Thalamus</tissue>
    </source>
</reference>
<accession>Q1JP61</accession>
<gene>
    <name type="primary">KDM8</name>
    <name type="synonym">JMJD5</name>
</gene>
<keyword id="KW-0031">Aminopeptidase</keyword>
<keyword id="KW-0090">Biological rhythms</keyword>
<keyword id="KW-0131">Cell cycle</keyword>
<keyword id="KW-0156">Chromatin regulator</keyword>
<keyword id="KW-0158">Chromosome</keyword>
<keyword id="KW-0223">Dioxygenase</keyword>
<keyword id="KW-0378">Hydrolase</keyword>
<keyword id="KW-0408">Iron</keyword>
<keyword id="KW-0479">Metal-binding</keyword>
<keyword id="KW-0539">Nucleus</keyword>
<keyword id="KW-0560">Oxidoreductase</keyword>
<keyword id="KW-0645">Protease</keyword>
<keyword id="KW-1185">Reference proteome</keyword>
<keyword id="KW-0804">Transcription</keyword>
<keyword id="KW-0805">Transcription regulation</keyword>
<protein>
    <recommendedName>
        <fullName evidence="1">Bifunctional peptidase and arginyl-hydroxylase JMJD5</fullName>
        <ecNumber evidence="1">1.14.11.73</ecNumber>
        <ecNumber evidence="1">3.4.-.-</ecNumber>
    </recommendedName>
    <alternativeName>
        <fullName evidence="1">JmjC domain-containing protein 5</fullName>
    </alternativeName>
    <alternativeName>
        <fullName evidence="1">Jumonji C domain-containing protein 5</fullName>
    </alternativeName>
    <alternativeName>
        <fullName evidence="1">L-arginine (3R)-hydroxylase KDM8</fullName>
    </alternativeName>
</protein>
<proteinExistence type="evidence at transcript level"/>
<feature type="chain" id="PRO_0000292009" description="Bifunctional peptidase and arginyl-hydroxylase JMJD5">
    <location>
        <begin position="1"/>
        <end position="406"/>
    </location>
</feature>
<feature type="domain" description="JmjC" evidence="3">
    <location>
        <begin position="261"/>
        <end position="406"/>
    </location>
</feature>
<feature type="region of interest" description="Interaction with RCCD1" evidence="1">
    <location>
        <begin position="1"/>
        <end position="99"/>
    </location>
</feature>
<feature type="region of interest" description="Disordered" evidence="4">
    <location>
        <begin position="143"/>
        <end position="167"/>
    </location>
</feature>
<feature type="compositionally biased region" description="Basic and acidic residues" evidence="4">
    <location>
        <begin position="158"/>
        <end position="167"/>
    </location>
</feature>
<feature type="binding site" evidence="1">
    <location>
        <position position="228"/>
    </location>
    <ligand>
        <name>a protein</name>
        <dbReference type="ChEBI" id="CHEBI:16541"/>
    </ligand>
    <ligandPart>
        <name>N(omega)-methyl-L-arginine residue</name>
        <dbReference type="ChEBI" id="CHEBI:65280"/>
    </ligandPart>
</feature>
<feature type="binding site" evidence="1">
    <location>
        <position position="262"/>
    </location>
    <ligand>
        <name>2-oxoglutarate</name>
        <dbReference type="ChEBI" id="CHEBI:16810"/>
    </ligand>
</feature>
<feature type="binding site" evidence="1">
    <location>
        <position position="265"/>
    </location>
    <ligand>
        <name>a protein</name>
        <dbReference type="ChEBI" id="CHEBI:16541"/>
    </ligand>
    <ligandPart>
        <name>N(omega),N(omega)'-dimethyl-L-arginine residue</name>
        <dbReference type="ChEBI" id="CHEBI:88221"/>
    </ligandPart>
</feature>
<feature type="binding site" evidence="1">
    <location>
        <position position="265"/>
    </location>
    <ligand>
        <name>a protein</name>
        <dbReference type="ChEBI" id="CHEBI:16541"/>
    </ligand>
    <ligandPart>
        <name>N(omega)-methyl-L-arginine residue</name>
        <dbReference type="ChEBI" id="CHEBI:65280"/>
    </ligandPart>
</feature>
<feature type="binding site" evidence="1">
    <location>
        <position position="308"/>
    </location>
    <ligand>
        <name>2-oxoglutarate</name>
        <dbReference type="ChEBI" id="CHEBI:16810"/>
    </ligand>
</feature>
<feature type="binding site" evidence="1">
    <location>
        <position position="308"/>
    </location>
    <ligand>
        <name>a protein</name>
        <dbReference type="ChEBI" id="CHEBI:16541"/>
    </ligand>
    <ligandPart>
        <name>N(omega),N(omega)'-dimethyl-L-arginine residue</name>
        <dbReference type="ChEBI" id="CHEBI:88221"/>
    </ligandPart>
</feature>
<feature type="binding site" evidence="1">
    <location>
        <position position="308"/>
    </location>
    <ligand>
        <name>a protein</name>
        <dbReference type="ChEBI" id="CHEBI:16541"/>
    </ligand>
    <ligandPart>
        <name>N(omega)-methyl-L-arginine residue</name>
        <dbReference type="ChEBI" id="CHEBI:65280"/>
    </ligandPart>
</feature>
<feature type="binding site" evidence="1">
    <location>
        <position position="311"/>
    </location>
    <ligand>
        <name>2-oxoglutarate</name>
        <dbReference type="ChEBI" id="CHEBI:16810"/>
    </ligand>
</feature>
<feature type="binding site" evidence="3">
    <location>
        <position position="311"/>
    </location>
    <ligand>
        <name>Fe cation</name>
        <dbReference type="ChEBI" id="CHEBI:24875"/>
        <note>catalytic</note>
    </ligand>
</feature>
<feature type="binding site" evidence="3">
    <location>
        <position position="313"/>
    </location>
    <ligand>
        <name>Fe cation</name>
        <dbReference type="ChEBI" id="CHEBI:24875"/>
        <note>catalytic</note>
    </ligand>
</feature>
<feature type="binding site" evidence="1">
    <location>
        <position position="317"/>
    </location>
    <ligand>
        <name>2-oxoglutarate</name>
        <dbReference type="ChEBI" id="CHEBI:16810"/>
    </ligand>
</feature>
<feature type="binding site" evidence="1">
    <location>
        <position position="326"/>
    </location>
    <ligand>
        <name>2-oxoglutarate</name>
        <dbReference type="ChEBI" id="CHEBI:16810"/>
    </ligand>
</feature>
<feature type="binding site" evidence="1">
    <location>
        <position position="390"/>
    </location>
    <ligand>
        <name>2-oxoglutarate</name>
        <dbReference type="ChEBI" id="CHEBI:16810"/>
    </ligand>
</feature>
<feature type="binding site" evidence="3">
    <location>
        <position position="390"/>
    </location>
    <ligand>
        <name>Fe cation</name>
        <dbReference type="ChEBI" id="CHEBI:24875"/>
        <note>catalytic</note>
    </ligand>
</feature>
<feature type="binding site" evidence="1">
    <location>
        <position position="404"/>
    </location>
    <ligand>
        <name>2-oxoglutarate</name>
        <dbReference type="ChEBI" id="CHEBI:16810"/>
    </ligand>
</feature>
<dbReference type="EC" id="1.14.11.73" evidence="1"/>
<dbReference type="EC" id="3.4.-.-" evidence="1"/>
<dbReference type="EMBL" id="BT025493">
    <property type="protein sequence ID" value="ABF57449.1"/>
    <property type="molecule type" value="mRNA"/>
</dbReference>
<dbReference type="EMBL" id="BC123879">
    <property type="protein sequence ID" value="AAI23880.1"/>
    <property type="molecule type" value="mRNA"/>
</dbReference>
<dbReference type="RefSeq" id="NP_001068807.1">
    <property type="nucleotide sequence ID" value="NM_001075339.1"/>
</dbReference>
<dbReference type="RefSeq" id="XP_024840512.1">
    <property type="nucleotide sequence ID" value="XM_024984744.2"/>
</dbReference>
<dbReference type="SMR" id="Q1JP61"/>
<dbReference type="FunCoup" id="Q1JP61">
    <property type="interactions" value="620"/>
</dbReference>
<dbReference type="STRING" id="9913.ENSBTAP00000026023"/>
<dbReference type="PaxDb" id="9913-ENSBTAP00000026023"/>
<dbReference type="GeneID" id="507905"/>
<dbReference type="KEGG" id="bta:507905"/>
<dbReference type="CTD" id="79831"/>
<dbReference type="VEuPathDB" id="HostDB:ENSBTAG00000019530"/>
<dbReference type="eggNOG" id="KOG2132">
    <property type="taxonomic scope" value="Eukaryota"/>
</dbReference>
<dbReference type="HOGENOM" id="CLU_016785_0_3_1"/>
<dbReference type="InParanoid" id="Q1JP61"/>
<dbReference type="OMA" id="KASYQEC"/>
<dbReference type="OrthoDB" id="47172at2759"/>
<dbReference type="TreeFam" id="TF315056"/>
<dbReference type="Reactome" id="R-BTA-9629569">
    <property type="pathway name" value="Protein hydroxylation"/>
</dbReference>
<dbReference type="Proteomes" id="UP000009136">
    <property type="component" value="Chromosome 25"/>
</dbReference>
<dbReference type="Bgee" id="ENSBTAG00000019530">
    <property type="expression patterns" value="Expressed in retina and 103 other cell types or tissues"/>
</dbReference>
<dbReference type="GO" id="GO:0005694">
    <property type="term" value="C:chromosome"/>
    <property type="evidence" value="ECO:0007669"/>
    <property type="project" value="UniProtKB-SubCell"/>
</dbReference>
<dbReference type="GO" id="GO:0005634">
    <property type="term" value="C:nucleus"/>
    <property type="evidence" value="ECO:0000250"/>
    <property type="project" value="UniProtKB"/>
</dbReference>
<dbReference type="GO" id="GO:0004177">
    <property type="term" value="F:aminopeptidase activity"/>
    <property type="evidence" value="ECO:0007669"/>
    <property type="project" value="UniProtKB-KW"/>
</dbReference>
<dbReference type="GO" id="GO:0003682">
    <property type="term" value="F:chromatin binding"/>
    <property type="evidence" value="ECO:0000250"/>
    <property type="project" value="UniProtKB"/>
</dbReference>
<dbReference type="GO" id="GO:0051864">
    <property type="term" value="F:histone H3K36 demethylase activity"/>
    <property type="evidence" value="ECO:0000250"/>
    <property type="project" value="UniProtKB"/>
</dbReference>
<dbReference type="GO" id="GO:0046872">
    <property type="term" value="F:metal ion binding"/>
    <property type="evidence" value="ECO:0007669"/>
    <property type="project" value="UniProtKB-KW"/>
</dbReference>
<dbReference type="GO" id="GO:0106157">
    <property type="term" value="F:peptidyl-arginine 3-dioxygenase activity"/>
    <property type="evidence" value="ECO:0000250"/>
    <property type="project" value="UniProtKB"/>
</dbReference>
<dbReference type="GO" id="GO:0032922">
    <property type="term" value="P:circadian regulation of gene expression"/>
    <property type="evidence" value="ECO:0000250"/>
    <property type="project" value="UniProtKB"/>
</dbReference>
<dbReference type="GO" id="GO:0000086">
    <property type="term" value="P:G2/M transition of mitotic cell cycle"/>
    <property type="evidence" value="ECO:0000250"/>
    <property type="project" value="UniProtKB"/>
</dbReference>
<dbReference type="GO" id="GO:0045892">
    <property type="term" value="P:negative regulation of DNA-templated transcription"/>
    <property type="evidence" value="ECO:0000250"/>
    <property type="project" value="UniProtKB"/>
</dbReference>
<dbReference type="GO" id="GO:0045893">
    <property type="term" value="P:positive regulation of DNA-templated transcription"/>
    <property type="evidence" value="ECO:0000250"/>
    <property type="project" value="UniProtKB"/>
</dbReference>
<dbReference type="GO" id="GO:0031648">
    <property type="term" value="P:protein destabilization"/>
    <property type="evidence" value="ECO:0000250"/>
    <property type="project" value="UniProtKB"/>
</dbReference>
<dbReference type="GO" id="GO:0006508">
    <property type="term" value="P:proteolysis"/>
    <property type="evidence" value="ECO:0007669"/>
    <property type="project" value="UniProtKB-KW"/>
</dbReference>
<dbReference type="FunFam" id="2.60.120.650:FF:000019">
    <property type="entry name" value="Bifunctional peptidase and arginyl-hydroxylase JMJD5"/>
    <property type="match status" value="1"/>
</dbReference>
<dbReference type="Gene3D" id="2.60.120.650">
    <property type="entry name" value="Cupin"/>
    <property type="match status" value="1"/>
</dbReference>
<dbReference type="InterPro" id="IPR056520">
    <property type="entry name" value="ARM_KDM8_N"/>
</dbReference>
<dbReference type="InterPro" id="IPR041667">
    <property type="entry name" value="Cupin_8"/>
</dbReference>
<dbReference type="InterPro" id="IPR003347">
    <property type="entry name" value="JmjC_dom"/>
</dbReference>
<dbReference type="PANTHER" id="PTHR12461:SF106">
    <property type="entry name" value="BIFUNCTIONAL PEPTIDASE AND ARGINYL-HYDROXYLASE JMJD5"/>
    <property type="match status" value="1"/>
</dbReference>
<dbReference type="PANTHER" id="PTHR12461">
    <property type="entry name" value="HYPOXIA-INDUCIBLE FACTOR 1 ALPHA INHIBITOR-RELATED"/>
    <property type="match status" value="1"/>
</dbReference>
<dbReference type="Pfam" id="PF24472">
    <property type="entry name" value="ARM_KDM8_N"/>
    <property type="match status" value="1"/>
</dbReference>
<dbReference type="Pfam" id="PF13621">
    <property type="entry name" value="Cupin_8"/>
    <property type="match status" value="1"/>
</dbReference>
<dbReference type="SMART" id="SM00558">
    <property type="entry name" value="JmjC"/>
    <property type="match status" value="1"/>
</dbReference>
<dbReference type="SUPFAM" id="SSF51197">
    <property type="entry name" value="Clavaminate synthase-like"/>
    <property type="match status" value="1"/>
</dbReference>
<dbReference type="PROSITE" id="PS51184">
    <property type="entry name" value="JMJC"/>
    <property type="match status" value="1"/>
</dbReference>
<sequence length="406" mass="45907">MAGPSTLWETLQALLPHTKEELKLELGEKVEGSVLMLLQEAAELFLGGQRRECLQTCEVLLDYSWEKLNTGPWQHVDKDWRRVYAFGCLLKAVCLCEPPGDAASVAAALKACDMGLLMGAAILGDILLKVAAVLQKYLLSGKRPAPGPSQEPPGTKKARNDHVPIPDVTTERTVPRLHCPSLQYFKKHFLVPGRPVILEGVANHWPCMKKWSLEYIQEVAGCRTVPVEVGSRYTDEEWSQTLMTVNEFISKYIREEPKDIGYLAQHQLFDQIPELKQDISIPDYCCLGDGEEEEITINAWFGPQGTVSPLHQDPQQNFLAQVMGRKYIRLYSPQESEALYPHDTHLLHNTSQVDVENPDLEKFPRFAEAPFLSCVLSPGEVLFIPVKHWHYVRALDLSFSVSFWWS</sequence>
<evidence type="ECO:0000250" key="1">
    <source>
        <dbReference type="UniProtKB" id="Q8N371"/>
    </source>
</evidence>
<evidence type="ECO:0000250" key="2">
    <source>
        <dbReference type="UniProtKB" id="Q9CXT6"/>
    </source>
</evidence>
<evidence type="ECO:0000255" key="3">
    <source>
        <dbReference type="PROSITE-ProRule" id="PRU00538"/>
    </source>
</evidence>
<evidence type="ECO:0000256" key="4">
    <source>
        <dbReference type="SAM" id="MobiDB-lite"/>
    </source>
</evidence>
<organism>
    <name type="scientific">Bos taurus</name>
    <name type="common">Bovine</name>
    <dbReference type="NCBI Taxonomy" id="9913"/>
    <lineage>
        <taxon>Eukaryota</taxon>
        <taxon>Metazoa</taxon>
        <taxon>Chordata</taxon>
        <taxon>Craniata</taxon>
        <taxon>Vertebrata</taxon>
        <taxon>Euteleostomi</taxon>
        <taxon>Mammalia</taxon>
        <taxon>Eutheria</taxon>
        <taxon>Laurasiatheria</taxon>
        <taxon>Artiodactyla</taxon>
        <taxon>Ruminantia</taxon>
        <taxon>Pecora</taxon>
        <taxon>Bovidae</taxon>
        <taxon>Bovinae</taxon>
        <taxon>Bos</taxon>
    </lineage>
</organism>
<comment type="function">
    <text evidence="1 2">Bifunctional enzyme that acts both as an endopeptidase and 2-oxoglutarate-dependent monooxygenase. Endopeptidase that cleaves histones N-terminal tails at the carboxyl side of methylated arginine or lysine residues, to generate 'tailless nucleosomes', which may trigger transcription elongation. Preferentially recognizes and cleaves monomethylated and dimethylated arginine residues of histones H2, H3 and H4. After initial cleavage, continues to digest histones tails via its aminopeptidase activity. Upon DNA damage, cleaves the N-terminal tail of histone H3 at monomethylated lysine residues, preferably at monomethylated 'Lys-9' (H3K9me1). The histone variant H3F3A is the major target for cleavage. Additionally, acts as a Fe(2+) and 2-oxoglutarate-dependent monooxygenase, catalyzing (R)-stereospecific hydroxylation at C-3 of 'Arg-137' of RPS6 and 'Arg-141' of RCCD1, but the biological significance of this activity remains to be established. Regulates mitosis through different mechanisms: Plays a role in transcriptional repression of satellite repeats, possibly by regulating H3K36 methylation levels in centromeric regions together with RCCD1. Possibly together with RCCD1, is involved in proper mitotic spindle organization and chromosome segregation. Negatively regulates cell cycle repressor CDKN1A/p21, which controls G1/S phase transition. Required for G2/M phase cell cycle progression. Regulates expression of CCNA1/cyclin-A1, leading to cancer cell proliferation. Also, plays a role in regulating alpha-tubulin acetylation and cytoskeletal microtubule stability involved in epithelial to mesenchymal transition (By similarity). Regulates the circadian gene expression in the liver (By similarity). Represses the transcriptional activator activity of the CLOCK-BMAL1 heterodimer in a catalytically-independent manner (By similarity). Negatively regulates the protein stability and function of CRY1; required for AMPK-FBXL3-induced CRY1 degradation (By similarity).</text>
</comment>
<comment type="catalytic activity">
    <reaction evidence="1">
        <text>L-arginyl-[protein] + 2-oxoglutarate + O2 = (3R)-3-hydroxy-L-arginyl-[protein] + succinate + CO2</text>
        <dbReference type="Rhea" id="RHEA:56744"/>
        <dbReference type="Rhea" id="RHEA-COMP:10532"/>
        <dbReference type="Rhea" id="RHEA-COMP:14712"/>
        <dbReference type="ChEBI" id="CHEBI:15379"/>
        <dbReference type="ChEBI" id="CHEBI:16526"/>
        <dbReference type="ChEBI" id="CHEBI:16810"/>
        <dbReference type="ChEBI" id="CHEBI:29965"/>
        <dbReference type="ChEBI" id="CHEBI:30031"/>
        <dbReference type="ChEBI" id="CHEBI:78294"/>
        <dbReference type="EC" id="1.14.11.73"/>
    </reaction>
</comment>
<comment type="cofactor">
    <cofactor evidence="1">
        <name>Fe(2+)</name>
        <dbReference type="ChEBI" id="CHEBI:29033"/>
    </cofactor>
    <text evidence="1">Binds 1 Fe(2+) ion per subunit.</text>
</comment>
<comment type="subunit">
    <text evidence="1 2">Can form homodimers (via JmjC domain). Found in a complex with RCCD1. Interacts (via N-terminus) with RCCD1 (via N-terminus); this interaction stimulates H3K36me3 and H3K36me2 demethylation. Interacts (via JmjC domain) with H3C1 (By similarity). Interacts with FBXL3 and PSMD2 (By similarity). Interacts with CRY1 in a FBXL3-dependent manner (By similarity).</text>
</comment>
<comment type="subcellular location">
    <subcellularLocation>
        <location evidence="1">Nucleus</location>
    </subcellularLocation>
    <subcellularLocation>
        <location evidence="1">Chromosome</location>
    </subcellularLocation>
    <text evidence="1">Colocalizes with trimethylated 'Lys-9' of histone H3 (H3K9me3).</text>
</comment>
<comment type="caution">
    <text evidence="1">The demethylase activity of JMJD5 is controversial. Demethylase activity towards H3K36me2 was observed in vivo and in vitro. In addition, demethylase activity towards H3K36me3 when in a complex with RCCD1 has been observed. In contrast, in other studies, JMJD5 was shown not to display any demethylase activity toward methylated H3K36 nor toward other methyllysines in the N-terminal tails of H3 and H4 in vitro.</text>
</comment>
<name>KDM8_BOVIN</name>